<protein>
    <recommendedName>
        <fullName evidence="1">6,7-dimethyl-8-ribityllumazine synthase</fullName>
        <shortName evidence="1">DMRL synthase</shortName>
        <shortName evidence="1">LS</shortName>
        <shortName evidence="1">Lumazine synthase</shortName>
        <ecNumber evidence="1">2.5.1.78</ecNumber>
    </recommendedName>
</protein>
<keyword id="KW-0686">Riboflavin biosynthesis</keyword>
<keyword id="KW-0808">Transferase</keyword>
<dbReference type="EC" id="2.5.1.78" evidence="1"/>
<dbReference type="EMBL" id="CP000736">
    <property type="protein sequence ID" value="ABR52699.1"/>
    <property type="molecule type" value="Genomic_DNA"/>
</dbReference>
<dbReference type="SMR" id="A6U2N1"/>
<dbReference type="KEGG" id="sah:SaurJH1_1855"/>
<dbReference type="HOGENOM" id="CLU_089358_1_1_9"/>
<dbReference type="UniPathway" id="UPA00275">
    <property type="reaction ID" value="UER00404"/>
</dbReference>
<dbReference type="GO" id="GO:0005829">
    <property type="term" value="C:cytosol"/>
    <property type="evidence" value="ECO:0007669"/>
    <property type="project" value="TreeGrafter"/>
</dbReference>
<dbReference type="GO" id="GO:0009349">
    <property type="term" value="C:riboflavin synthase complex"/>
    <property type="evidence" value="ECO:0007669"/>
    <property type="project" value="InterPro"/>
</dbReference>
<dbReference type="GO" id="GO:0000906">
    <property type="term" value="F:6,7-dimethyl-8-ribityllumazine synthase activity"/>
    <property type="evidence" value="ECO:0007669"/>
    <property type="project" value="UniProtKB-UniRule"/>
</dbReference>
<dbReference type="GO" id="GO:0009231">
    <property type="term" value="P:riboflavin biosynthetic process"/>
    <property type="evidence" value="ECO:0007669"/>
    <property type="project" value="UniProtKB-UniRule"/>
</dbReference>
<dbReference type="CDD" id="cd09209">
    <property type="entry name" value="Lumazine_synthase-I"/>
    <property type="match status" value="1"/>
</dbReference>
<dbReference type="FunFam" id="3.40.50.960:FF:000001">
    <property type="entry name" value="6,7-dimethyl-8-ribityllumazine synthase"/>
    <property type="match status" value="1"/>
</dbReference>
<dbReference type="Gene3D" id="3.40.50.960">
    <property type="entry name" value="Lumazine/riboflavin synthase"/>
    <property type="match status" value="1"/>
</dbReference>
<dbReference type="HAMAP" id="MF_00178">
    <property type="entry name" value="Lumazine_synth"/>
    <property type="match status" value="1"/>
</dbReference>
<dbReference type="InterPro" id="IPR034964">
    <property type="entry name" value="LS"/>
</dbReference>
<dbReference type="InterPro" id="IPR002180">
    <property type="entry name" value="LS/RS"/>
</dbReference>
<dbReference type="InterPro" id="IPR036467">
    <property type="entry name" value="LS/RS_sf"/>
</dbReference>
<dbReference type="NCBIfam" id="TIGR00114">
    <property type="entry name" value="lumazine-synth"/>
    <property type="match status" value="1"/>
</dbReference>
<dbReference type="NCBIfam" id="NF000812">
    <property type="entry name" value="PRK00061.1-4"/>
    <property type="match status" value="1"/>
</dbReference>
<dbReference type="PANTHER" id="PTHR21058:SF0">
    <property type="entry name" value="6,7-DIMETHYL-8-RIBITYLLUMAZINE SYNTHASE"/>
    <property type="match status" value="1"/>
</dbReference>
<dbReference type="PANTHER" id="PTHR21058">
    <property type="entry name" value="6,7-DIMETHYL-8-RIBITYLLUMAZINE SYNTHASE DMRL SYNTHASE LUMAZINE SYNTHASE"/>
    <property type="match status" value="1"/>
</dbReference>
<dbReference type="Pfam" id="PF00885">
    <property type="entry name" value="DMRL_synthase"/>
    <property type="match status" value="1"/>
</dbReference>
<dbReference type="SUPFAM" id="SSF52121">
    <property type="entry name" value="Lumazine synthase"/>
    <property type="match status" value="1"/>
</dbReference>
<proteinExistence type="inferred from homology"/>
<sequence>MNFEGKLIGKDLKVAIVVSRFNDFITGRLLEGAKDTLIRHDVNEDNIDVAFVPGAFEIPLVAKKLASSGNYDAIITLGCVIRGATSHYDYVCNEVAKGVSKVNDQTNVPVIFGILTTESIEQAVERAGTKAGNKGAEAAVSAIEMANLLKSIKA</sequence>
<accession>A6U2N1</accession>
<comment type="function">
    <text evidence="1">Catalyzes the formation of 6,7-dimethyl-8-ribityllumazine by condensation of 5-amino-6-(D-ribitylamino)uracil with 3,4-dihydroxy-2-butanone 4-phosphate. This is the penultimate step in the biosynthesis of riboflavin.</text>
</comment>
<comment type="catalytic activity">
    <reaction evidence="1">
        <text>(2S)-2-hydroxy-3-oxobutyl phosphate + 5-amino-6-(D-ribitylamino)uracil = 6,7-dimethyl-8-(1-D-ribityl)lumazine + phosphate + 2 H2O + H(+)</text>
        <dbReference type="Rhea" id="RHEA:26152"/>
        <dbReference type="ChEBI" id="CHEBI:15377"/>
        <dbReference type="ChEBI" id="CHEBI:15378"/>
        <dbReference type="ChEBI" id="CHEBI:15934"/>
        <dbReference type="ChEBI" id="CHEBI:43474"/>
        <dbReference type="ChEBI" id="CHEBI:58201"/>
        <dbReference type="ChEBI" id="CHEBI:58830"/>
        <dbReference type="EC" id="2.5.1.78"/>
    </reaction>
</comment>
<comment type="pathway">
    <text evidence="1">Cofactor biosynthesis; riboflavin biosynthesis; riboflavin from 2-hydroxy-3-oxobutyl phosphate and 5-amino-6-(D-ribitylamino)uracil: step 1/2.</text>
</comment>
<comment type="subunit">
    <text evidence="1">Forms an icosahedral capsid composed of 60 subunits, arranged as a dodecamer of pentamers.</text>
</comment>
<comment type="similarity">
    <text evidence="1">Belongs to the DMRL synthase family.</text>
</comment>
<name>RISB_STAA2</name>
<evidence type="ECO:0000255" key="1">
    <source>
        <dbReference type="HAMAP-Rule" id="MF_00178"/>
    </source>
</evidence>
<feature type="chain" id="PRO_1000077251" description="6,7-dimethyl-8-ribityllumazine synthase">
    <location>
        <begin position="1"/>
        <end position="154"/>
    </location>
</feature>
<feature type="active site" description="Proton donor" evidence="1">
    <location>
        <position position="87"/>
    </location>
</feature>
<feature type="binding site" evidence="1">
    <location>
        <position position="21"/>
    </location>
    <ligand>
        <name>5-amino-6-(D-ribitylamino)uracil</name>
        <dbReference type="ChEBI" id="CHEBI:15934"/>
    </ligand>
</feature>
<feature type="binding site" evidence="1">
    <location>
        <begin position="55"/>
        <end position="57"/>
    </location>
    <ligand>
        <name>5-amino-6-(D-ribitylamino)uracil</name>
        <dbReference type="ChEBI" id="CHEBI:15934"/>
    </ligand>
</feature>
<feature type="binding site" evidence="1">
    <location>
        <begin position="79"/>
        <end position="81"/>
    </location>
    <ligand>
        <name>5-amino-6-(D-ribitylamino)uracil</name>
        <dbReference type="ChEBI" id="CHEBI:15934"/>
    </ligand>
</feature>
<feature type="binding site" evidence="1">
    <location>
        <begin position="84"/>
        <end position="85"/>
    </location>
    <ligand>
        <name>(2S)-2-hydroxy-3-oxobutyl phosphate</name>
        <dbReference type="ChEBI" id="CHEBI:58830"/>
    </ligand>
</feature>
<feature type="binding site" evidence="1">
    <location>
        <position position="112"/>
    </location>
    <ligand>
        <name>5-amino-6-(D-ribitylamino)uracil</name>
        <dbReference type="ChEBI" id="CHEBI:15934"/>
    </ligand>
</feature>
<feature type="binding site" evidence="1">
    <location>
        <position position="126"/>
    </location>
    <ligand>
        <name>(2S)-2-hydroxy-3-oxobutyl phosphate</name>
        <dbReference type="ChEBI" id="CHEBI:58830"/>
    </ligand>
</feature>
<gene>
    <name evidence="1" type="primary">ribH</name>
    <name type="ordered locus">SaurJH1_1855</name>
</gene>
<organism>
    <name type="scientific">Staphylococcus aureus (strain JH1)</name>
    <dbReference type="NCBI Taxonomy" id="359787"/>
    <lineage>
        <taxon>Bacteria</taxon>
        <taxon>Bacillati</taxon>
        <taxon>Bacillota</taxon>
        <taxon>Bacilli</taxon>
        <taxon>Bacillales</taxon>
        <taxon>Staphylococcaceae</taxon>
        <taxon>Staphylococcus</taxon>
    </lineage>
</organism>
<reference key="1">
    <citation type="submission" date="2007-06" db="EMBL/GenBank/DDBJ databases">
        <title>Complete sequence of chromosome of Staphylococcus aureus subsp. aureus JH1.</title>
        <authorList>
            <consortium name="US DOE Joint Genome Institute"/>
            <person name="Copeland A."/>
            <person name="Lucas S."/>
            <person name="Lapidus A."/>
            <person name="Barry K."/>
            <person name="Detter J.C."/>
            <person name="Glavina del Rio T."/>
            <person name="Hammon N."/>
            <person name="Israni S."/>
            <person name="Dalin E."/>
            <person name="Tice H."/>
            <person name="Pitluck S."/>
            <person name="Chain P."/>
            <person name="Malfatti S."/>
            <person name="Shin M."/>
            <person name="Vergez L."/>
            <person name="Schmutz J."/>
            <person name="Larimer F."/>
            <person name="Land M."/>
            <person name="Hauser L."/>
            <person name="Kyrpides N."/>
            <person name="Ivanova N."/>
            <person name="Tomasz A."/>
            <person name="Richardson P."/>
        </authorList>
    </citation>
    <scope>NUCLEOTIDE SEQUENCE [LARGE SCALE GENOMIC DNA]</scope>
    <source>
        <strain>JH1</strain>
    </source>
</reference>